<feature type="chain" id="PRO_0000306753" description="Small ribosomal subunit protein uS13">
    <location>
        <begin position="1"/>
        <end position="148"/>
    </location>
</feature>
<feature type="region of interest" description="Disordered" evidence="2">
    <location>
        <begin position="128"/>
        <end position="148"/>
    </location>
</feature>
<protein>
    <recommendedName>
        <fullName evidence="1">Small ribosomal subunit protein uS13</fullName>
    </recommendedName>
    <alternativeName>
        <fullName evidence="3">30S ribosomal protein S13</fullName>
    </alternativeName>
</protein>
<evidence type="ECO:0000255" key="1">
    <source>
        <dbReference type="HAMAP-Rule" id="MF_01315"/>
    </source>
</evidence>
<evidence type="ECO:0000256" key="2">
    <source>
        <dbReference type="SAM" id="MobiDB-lite"/>
    </source>
</evidence>
<evidence type="ECO:0000305" key="3"/>
<sequence length="148" mass="16880">MADEEIRHLVRIMNTDLQGKKPVKYALTGIRGIGLRTSRVIVDSTGIDPNAVIGYLSDEDIKKLDSTIDKFEEQLPKWMLNRQFDPLTGENKHLLGQDIILTLKEDLNDLKKSRAYRGLRHERGLKVRGQRTKSTGRRGSTIGVRKKK</sequence>
<proteinExistence type="inferred from homology"/>
<name>RS13_METBU</name>
<accession>Q12ZR6</accession>
<reference key="1">
    <citation type="journal article" date="2009" name="ISME J.">
        <title>The genome sequence of the psychrophilic archaeon, Methanococcoides burtonii: the role of genome evolution in cold adaptation.</title>
        <authorList>
            <person name="Allen M.A."/>
            <person name="Lauro F.M."/>
            <person name="Williams T.J."/>
            <person name="Burg D."/>
            <person name="Siddiqui K.S."/>
            <person name="De Francisci D."/>
            <person name="Chong K.W."/>
            <person name="Pilak O."/>
            <person name="Chew H.H."/>
            <person name="De Maere M.Z."/>
            <person name="Ting L."/>
            <person name="Katrib M."/>
            <person name="Ng C."/>
            <person name="Sowers K.R."/>
            <person name="Galperin M.Y."/>
            <person name="Anderson I.J."/>
            <person name="Ivanova N."/>
            <person name="Dalin E."/>
            <person name="Martinez M."/>
            <person name="Lapidus A."/>
            <person name="Hauser L."/>
            <person name="Land M."/>
            <person name="Thomas T."/>
            <person name="Cavicchioli R."/>
        </authorList>
    </citation>
    <scope>NUCLEOTIDE SEQUENCE [LARGE SCALE GENOMIC DNA]</scope>
    <source>
        <strain>DSM 6242 / NBRC 107633 / OCM 468 / ACE-M</strain>
    </source>
</reference>
<comment type="function">
    <text evidence="1">Located at the top of the head of the 30S subunit, it contacts several helices of the 16S rRNA. In the 70S ribosome it contacts the 23S rRNA (bridge B1a) and protein L5 of the 50S subunit (bridge B1b), connecting the 2 subunits; these bridges are implicated in subunit movement.</text>
</comment>
<comment type="subunit">
    <text evidence="1">Part of the 30S ribosomal subunit. Forms a loose heterodimer with protein S19. Forms two bridges to the 50S subunit in the 70S ribosome.</text>
</comment>
<comment type="similarity">
    <text evidence="1">Belongs to the universal ribosomal protein uS13 family.</text>
</comment>
<dbReference type="EMBL" id="CP000300">
    <property type="protein sequence ID" value="ABE51060.1"/>
    <property type="molecule type" value="Genomic_DNA"/>
</dbReference>
<dbReference type="RefSeq" id="WP_011498224.1">
    <property type="nucleotide sequence ID" value="NC_007955.1"/>
</dbReference>
<dbReference type="SMR" id="Q12ZR6"/>
<dbReference type="STRING" id="259564.Mbur_0036"/>
<dbReference type="GeneID" id="3996900"/>
<dbReference type="KEGG" id="mbu:Mbur_0036"/>
<dbReference type="HOGENOM" id="CLU_103849_0_1_2"/>
<dbReference type="OrthoDB" id="372127at2157"/>
<dbReference type="Proteomes" id="UP000001979">
    <property type="component" value="Chromosome"/>
</dbReference>
<dbReference type="GO" id="GO:0005829">
    <property type="term" value="C:cytosol"/>
    <property type="evidence" value="ECO:0007669"/>
    <property type="project" value="TreeGrafter"/>
</dbReference>
<dbReference type="GO" id="GO:0015935">
    <property type="term" value="C:small ribosomal subunit"/>
    <property type="evidence" value="ECO:0007669"/>
    <property type="project" value="TreeGrafter"/>
</dbReference>
<dbReference type="GO" id="GO:0019843">
    <property type="term" value="F:rRNA binding"/>
    <property type="evidence" value="ECO:0007669"/>
    <property type="project" value="UniProtKB-UniRule"/>
</dbReference>
<dbReference type="GO" id="GO:0003735">
    <property type="term" value="F:structural constituent of ribosome"/>
    <property type="evidence" value="ECO:0007669"/>
    <property type="project" value="InterPro"/>
</dbReference>
<dbReference type="GO" id="GO:0006412">
    <property type="term" value="P:translation"/>
    <property type="evidence" value="ECO:0007669"/>
    <property type="project" value="UniProtKB-UniRule"/>
</dbReference>
<dbReference type="FunFam" id="1.10.8.50:FF:000001">
    <property type="entry name" value="30S ribosomal protein S13"/>
    <property type="match status" value="1"/>
</dbReference>
<dbReference type="FunFam" id="4.10.910.10:FF:000002">
    <property type="entry name" value="40S ribosomal protein S18"/>
    <property type="match status" value="1"/>
</dbReference>
<dbReference type="Gene3D" id="1.10.8.50">
    <property type="match status" value="1"/>
</dbReference>
<dbReference type="Gene3D" id="4.10.910.10">
    <property type="entry name" value="30s ribosomal protein s13, domain 2"/>
    <property type="match status" value="1"/>
</dbReference>
<dbReference type="HAMAP" id="MF_01315">
    <property type="entry name" value="Ribosomal_uS13"/>
    <property type="match status" value="1"/>
</dbReference>
<dbReference type="InterPro" id="IPR027437">
    <property type="entry name" value="Rbsml_uS13_C"/>
</dbReference>
<dbReference type="InterPro" id="IPR001892">
    <property type="entry name" value="Ribosomal_uS13"/>
</dbReference>
<dbReference type="InterPro" id="IPR010979">
    <property type="entry name" value="Ribosomal_uS13-like_H2TH"/>
</dbReference>
<dbReference type="InterPro" id="IPR019977">
    <property type="entry name" value="Ribosomal_uS13_archaeal"/>
</dbReference>
<dbReference type="InterPro" id="IPR018269">
    <property type="entry name" value="Ribosomal_uS13_CS"/>
</dbReference>
<dbReference type="NCBIfam" id="NF003140">
    <property type="entry name" value="PRK04053.1"/>
    <property type="match status" value="1"/>
</dbReference>
<dbReference type="NCBIfam" id="TIGR03629">
    <property type="entry name" value="uS13_arch"/>
    <property type="match status" value="1"/>
</dbReference>
<dbReference type="PANTHER" id="PTHR10871">
    <property type="entry name" value="30S RIBOSOMAL PROTEIN S13/40S RIBOSOMAL PROTEIN S18"/>
    <property type="match status" value="1"/>
</dbReference>
<dbReference type="PANTHER" id="PTHR10871:SF3">
    <property type="entry name" value="SMALL RIBOSOMAL SUBUNIT PROTEIN US13"/>
    <property type="match status" value="1"/>
</dbReference>
<dbReference type="Pfam" id="PF00416">
    <property type="entry name" value="Ribosomal_S13"/>
    <property type="match status" value="1"/>
</dbReference>
<dbReference type="PIRSF" id="PIRSF002134">
    <property type="entry name" value="Ribosomal_S13"/>
    <property type="match status" value="1"/>
</dbReference>
<dbReference type="SUPFAM" id="SSF46946">
    <property type="entry name" value="S13-like H2TH domain"/>
    <property type="match status" value="1"/>
</dbReference>
<dbReference type="PROSITE" id="PS00646">
    <property type="entry name" value="RIBOSOMAL_S13_1"/>
    <property type="match status" value="1"/>
</dbReference>
<dbReference type="PROSITE" id="PS50159">
    <property type="entry name" value="RIBOSOMAL_S13_2"/>
    <property type="match status" value="1"/>
</dbReference>
<organism>
    <name type="scientific">Methanococcoides burtonii (strain DSM 6242 / NBRC 107633 / OCM 468 / ACE-M)</name>
    <dbReference type="NCBI Taxonomy" id="259564"/>
    <lineage>
        <taxon>Archaea</taxon>
        <taxon>Methanobacteriati</taxon>
        <taxon>Methanobacteriota</taxon>
        <taxon>Stenosarchaea group</taxon>
        <taxon>Methanomicrobia</taxon>
        <taxon>Methanosarcinales</taxon>
        <taxon>Methanosarcinaceae</taxon>
        <taxon>Methanococcoides</taxon>
    </lineage>
</organism>
<gene>
    <name evidence="1" type="primary">rps13</name>
    <name type="ordered locus">Mbur_0036</name>
</gene>
<keyword id="KW-0687">Ribonucleoprotein</keyword>
<keyword id="KW-0689">Ribosomal protein</keyword>
<keyword id="KW-0694">RNA-binding</keyword>
<keyword id="KW-0699">rRNA-binding</keyword>